<accession>B3E278</accession>
<gene>
    <name evidence="1 3" type="primary">metXA</name>
    <name type="ordered locus">Glov_3478</name>
</gene>
<keyword id="KW-0012">Acyltransferase</keyword>
<keyword id="KW-0028">Amino-acid biosynthesis</keyword>
<keyword id="KW-0963">Cytoplasm</keyword>
<keyword id="KW-0486">Methionine biosynthesis</keyword>
<keyword id="KW-1185">Reference proteome</keyword>
<keyword id="KW-0808">Transferase</keyword>
<reference key="1">
    <citation type="submission" date="2008-05" db="EMBL/GenBank/DDBJ databases">
        <title>Complete sequence of chromosome of Geobacter lovleyi SZ.</title>
        <authorList>
            <consortium name="US DOE Joint Genome Institute"/>
            <person name="Lucas S."/>
            <person name="Copeland A."/>
            <person name="Lapidus A."/>
            <person name="Glavina del Rio T."/>
            <person name="Dalin E."/>
            <person name="Tice H."/>
            <person name="Bruce D."/>
            <person name="Goodwin L."/>
            <person name="Pitluck S."/>
            <person name="Chertkov O."/>
            <person name="Meincke L."/>
            <person name="Brettin T."/>
            <person name="Detter J.C."/>
            <person name="Han C."/>
            <person name="Tapia R."/>
            <person name="Kuske C.R."/>
            <person name="Schmutz J."/>
            <person name="Larimer F."/>
            <person name="Land M."/>
            <person name="Hauser L."/>
            <person name="Kyrpides N."/>
            <person name="Mikhailova N."/>
            <person name="Sung Y."/>
            <person name="Fletcher K.E."/>
            <person name="Ritalahti K.M."/>
            <person name="Loeffler F.E."/>
            <person name="Richardson P."/>
        </authorList>
    </citation>
    <scope>NUCLEOTIDE SEQUENCE [LARGE SCALE GENOMIC DNA]</scope>
    <source>
        <strain>ATCC BAA-1151 / DSM 17278 / SZ</strain>
    </source>
</reference>
<reference key="2">
    <citation type="journal article" date="2017" name="Nat. Chem. Biol.">
        <title>Parallel evolution of non-homologous isofunctional enzymes in methionine biosynthesis.</title>
        <authorList>
            <person name="Bastard K."/>
            <person name="Perret A."/>
            <person name="Mariage A."/>
            <person name="Bessonnet T."/>
            <person name="Pinet-Turpault A."/>
            <person name="Petit J.L."/>
            <person name="Darii E."/>
            <person name="Bazire P."/>
            <person name="Vergne-Vaxelaire C."/>
            <person name="Brewee C."/>
            <person name="Debard A."/>
            <person name="Pellouin V."/>
            <person name="Besnard-Gonnet M."/>
            <person name="Artiguenave F."/>
            <person name="Medigue C."/>
            <person name="Vallenet D."/>
            <person name="Danchin A."/>
            <person name="Zaparucha A."/>
            <person name="Weissenbach J."/>
            <person name="Salanoubat M."/>
            <person name="de Berardinis V."/>
        </authorList>
    </citation>
    <scope>FUNCTION</scope>
    <scope>CATALYTIC ACTIVITY</scope>
</reference>
<feature type="chain" id="PRO_1000115224" description="Homoserine O-acetyltransferase">
    <location>
        <begin position="1"/>
        <end position="367"/>
    </location>
</feature>
<feature type="domain" description="AB hydrolase-1" evidence="1">
    <location>
        <begin position="44"/>
        <end position="350"/>
    </location>
</feature>
<feature type="active site" description="Nucleophile" evidence="1">
    <location>
        <position position="150"/>
    </location>
</feature>
<feature type="active site" evidence="1">
    <location>
        <position position="311"/>
    </location>
</feature>
<feature type="active site" evidence="1">
    <location>
        <position position="344"/>
    </location>
</feature>
<feature type="binding site" evidence="1">
    <location>
        <position position="217"/>
    </location>
    <ligand>
        <name>substrate</name>
    </ligand>
</feature>
<feature type="binding site" evidence="1">
    <location>
        <position position="345"/>
    </location>
    <ligand>
        <name>substrate</name>
    </ligand>
</feature>
<organism>
    <name type="scientific">Trichlorobacter lovleyi (strain ATCC BAA-1151 / DSM 17278 / SZ)</name>
    <name type="common">Geobacter lovleyi</name>
    <dbReference type="NCBI Taxonomy" id="398767"/>
    <lineage>
        <taxon>Bacteria</taxon>
        <taxon>Pseudomonadati</taxon>
        <taxon>Thermodesulfobacteriota</taxon>
        <taxon>Desulfuromonadia</taxon>
        <taxon>Geobacterales</taxon>
        <taxon>Geobacteraceae</taxon>
        <taxon>Trichlorobacter</taxon>
    </lineage>
</organism>
<comment type="function">
    <text evidence="2">Transfers an acetyl group from acetyl-CoA to L-homoserine, forming acetyl-L-homoserine. In vitro, can also use propionyl-CoA or butiryl-CoA as acyl donor.</text>
</comment>
<comment type="catalytic activity">
    <reaction evidence="1 2">
        <text>L-homoserine + acetyl-CoA = O-acetyl-L-homoserine + CoA</text>
        <dbReference type="Rhea" id="RHEA:13701"/>
        <dbReference type="ChEBI" id="CHEBI:57287"/>
        <dbReference type="ChEBI" id="CHEBI:57288"/>
        <dbReference type="ChEBI" id="CHEBI:57476"/>
        <dbReference type="ChEBI" id="CHEBI:57716"/>
        <dbReference type="EC" id="2.3.1.31"/>
    </reaction>
</comment>
<comment type="pathway">
    <text evidence="1">Amino-acid biosynthesis; L-methionine biosynthesis via de novo pathway; O-acetyl-L-homoserine from L-homoserine: step 1/1.</text>
</comment>
<comment type="subunit">
    <text evidence="1">Homodimer.</text>
</comment>
<comment type="subcellular location">
    <subcellularLocation>
        <location evidence="1">Cytoplasm</location>
    </subcellularLocation>
</comment>
<comment type="similarity">
    <text evidence="1">Belongs to the AB hydrolase superfamily. MetX family.</text>
</comment>
<evidence type="ECO:0000255" key="1">
    <source>
        <dbReference type="HAMAP-Rule" id="MF_00296"/>
    </source>
</evidence>
<evidence type="ECO:0000269" key="2">
    <source>
    </source>
</evidence>
<evidence type="ECO:0000303" key="3">
    <source>
    </source>
</evidence>
<name>METXA_TRIL1</name>
<protein>
    <recommendedName>
        <fullName evidence="1">Homoserine O-acetyltransferase</fullName>
        <shortName evidence="1 3">HAT</shortName>
        <ecNumber evidence="1 2">2.3.1.31</ecNumber>
    </recommendedName>
    <alternativeName>
        <fullName evidence="1">Homoserine transacetylase</fullName>
        <shortName evidence="1">HTA</shortName>
    </alternativeName>
</protein>
<dbReference type="EC" id="2.3.1.31" evidence="1 2"/>
<dbReference type="EMBL" id="CP001089">
    <property type="protein sequence ID" value="ACD97181.1"/>
    <property type="molecule type" value="Genomic_DNA"/>
</dbReference>
<dbReference type="RefSeq" id="WP_012471501.1">
    <property type="nucleotide sequence ID" value="NC_010814.1"/>
</dbReference>
<dbReference type="SMR" id="B3E278"/>
<dbReference type="STRING" id="398767.Glov_3478"/>
<dbReference type="ESTHER" id="geols-metx">
    <property type="family name" value="Homoserine_transacetylase"/>
</dbReference>
<dbReference type="KEGG" id="glo:Glov_3478"/>
<dbReference type="eggNOG" id="COG2021">
    <property type="taxonomic scope" value="Bacteria"/>
</dbReference>
<dbReference type="HOGENOM" id="CLU_028760_1_2_7"/>
<dbReference type="OrthoDB" id="9800754at2"/>
<dbReference type="UniPathway" id="UPA00051">
    <property type="reaction ID" value="UER00074"/>
</dbReference>
<dbReference type="Proteomes" id="UP000002420">
    <property type="component" value="Chromosome"/>
</dbReference>
<dbReference type="GO" id="GO:0005737">
    <property type="term" value="C:cytoplasm"/>
    <property type="evidence" value="ECO:0007669"/>
    <property type="project" value="UniProtKB-SubCell"/>
</dbReference>
<dbReference type="GO" id="GO:0004414">
    <property type="term" value="F:homoserine O-acetyltransferase activity"/>
    <property type="evidence" value="ECO:0007669"/>
    <property type="project" value="UniProtKB-UniRule"/>
</dbReference>
<dbReference type="GO" id="GO:0009092">
    <property type="term" value="P:homoserine metabolic process"/>
    <property type="evidence" value="ECO:0007669"/>
    <property type="project" value="TreeGrafter"/>
</dbReference>
<dbReference type="GO" id="GO:0009086">
    <property type="term" value="P:methionine biosynthetic process"/>
    <property type="evidence" value="ECO:0007669"/>
    <property type="project" value="UniProtKB-UniRule"/>
</dbReference>
<dbReference type="FunFam" id="1.10.1740.110:FF:000001">
    <property type="entry name" value="Homoserine O-acetyltransferase"/>
    <property type="match status" value="1"/>
</dbReference>
<dbReference type="Gene3D" id="1.10.1740.110">
    <property type="match status" value="1"/>
</dbReference>
<dbReference type="Gene3D" id="3.40.50.1820">
    <property type="entry name" value="alpha/beta hydrolase"/>
    <property type="match status" value="1"/>
</dbReference>
<dbReference type="HAMAP" id="MF_00296">
    <property type="entry name" value="MetX_acyltransf"/>
    <property type="match status" value="1"/>
</dbReference>
<dbReference type="InterPro" id="IPR000073">
    <property type="entry name" value="AB_hydrolase_1"/>
</dbReference>
<dbReference type="InterPro" id="IPR029058">
    <property type="entry name" value="AB_hydrolase_fold"/>
</dbReference>
<dbReference type="InterPro" id="IPR008220">
    <property type="entry name" value="HAT_MetX-like"/>
</dbReference>
<dbReference type="NCBIfam" id="TIGR01392">
    <property type="entry name" value="homoserO_Ac_trn"/>
    <property type="match status" value="1"/>
</dbReference>
<dbReference type="NCBIfam" id="NF001209">
    <property type="entry name" value="PRK00175.1"/>
    <property type="match status" value="1"/>
</dbReference>
<dbReference type="PANTHER" id="PTHR32268">
    <property type="entry name" value="HOMOSERINE O-ACETYLTRANSFERASE"/>
    <property type="match status" value="1"/>
</dbReference>
<dbReference type="PANTHER" id="PTHR32268:SF11">
    <property type="entry name" value="HOMOSERINE O-ACETYLTRANSFERASE"/>
    <property type="match status" value="1"/>
</dbReference>
<dbReference type="Pfam" id="PF00561">
    <property type="entry name" value="Abhydrolase_1"/>
    <property type="match status" value="1"/>
</dbReference>
<dbReference type="PIRSF" id="PIRSF000443">
    <property type="entry name" value="Homoser_Ac_trans"/>
    <property type="match status" value="1"/>
</dbReference>
<dbReference type="SUPFAM" id="SSF53474">
    <property type="entry name" value="alpha/beta-Hydrolases"/>
    <property type="match status" value="1"/>
</dbReference>
<proteinExistence type="evidence at protein level"/>
<sequence length="367" mass="41452">MSIGVVHEQTITFEAGIRLESGRILAPITLVYELYGTMNADCSNVIMVEHAWTGDAHLAGKRREDDPKPGWWDAIVGPGRLLDTDRYCVLCSNVIGSCYGSTGPASINPRTGKRYNLSFPVITVRDMVRAQELLLDHLGIRRLLCVMGGSMGGMQALEWATQYPERVASVVALATTPRPSPQAISLNAVARWAIYNDPTWKKGEYKHNPKDGLALARGIGHITFLSDESMWQKFERRFSAKDGLFDFFGQFEVERYLNYNGYNFVDRFDANCFLYLAKALDLYDVAWGYESMTDAFSRITAPIQFFAFSSDWLYPPYQTEEMVTCLQGLGKEVEYHLIQSAYGHDAFLLEHETFTPMVRSLLERVAP</sequence>